<evidence type="ECO:0000255" key="1">
    <source>
        <dbReference type="HAMAP-Rule" id="MF_00330"/>
    </source>
</evidence>
<accession>Q6LX70</accession>
<organism>
    <name type="scientific">Methanococcus maripaludis (strain DSM 14266 / JCM 13030 / NBRC 101832 / S2 / LL)</name>
    <dbReference type="NCBI Taxonomy" id="267377"/>
    <lineage>
        <taxon>Archaea</taxon>
        <taxon>Methanobacteriati</taxon>
        <taxon>Methanobacteriota</taxon>
        <taxon>Methanomada group</taxon>
        <taxon>Methanococci</taxon>
        <taxon>Methanococcales</taxon>
        <taxon>Methanococcaceae</taxon>
        <taxon>Methanococcus</taxon>
    </lineage>
</organism>
<protein>
    <recommendedName>
        <fullName evidence="1">Cobalt transport protein CbiN</fullName>
    </recommendedName>
    <alternativeName>
        <fullName evidence="1">Energy-coupling factor transporter probable substrate-capture protein CbiN</fullName>
        <shortName evidence="1">ECF transporter S component CbiN</shortName>
    </alternativeName>
</protein>
<sequence length="98" mass="10797">MEFKHVLMILGVIILTLAPLIMYSGLGEDEGYFGGADGAAGDLIMEISPNYEPWFEPFWEPPSGEIESLLFALQAAIGAIIIGYFFGYNKAKYDAKNQ</sequence>
<keyword id="KW-1003">Cell membrane</keyword>
<keyword id="KW-0169">Cobalamin biosynthesis</keyword>
<keyword id="KW-0170">Cobalt</keyword>
<keyword id="KW-0171">Cobalt transport</keyword>
<keyword id="KW-0406">Ion transport</keyword>
<keyword id="KW-0472">Membrane</keyword>
<keyword id="KW-1185">Reference proteome</keyword>
<keyword id="KW-0812">Transmembrane</keyword>
<keyword id="KW-1133">Transmembrane helix</keyword>
<keyword id="KW-0813">Transport</keyword>
<name>CBIN_METMP</name>
<feature type="chain" id="PRO_1000019396" description="Cobalt transport protein CbiN">
    <location>
        <begin position="1"/>
        <end position="98"/>
    </location>
</feature>
<feature type="transmembrane region" description="Helical" evidence="1">
    <location>
        <begin position="6"/>
        <end position="26"/>
    </location>
</feature>
<feature type="transmembrane region" description="Helical" evidence="1">
    <location>
        <begin position="68"/>
        <end position="88"/>
    </location>
</feature>
<dbReference type="EMBL" id="BX950229">
    <property type="protein sequence ID" value="CAF31038.1"/>
    <property type="molecule type" value="Genomic_DNA"/>
</dbReference>
<dbReference type="RefSeq" id="WP_011171426.1">
    <property type="nucleotide sequence ID" value="NC_005791.1"/>
</dbReference>
<dbReference type="STRING" id="267377.MMP1482"/>
<dbReference type="EnsemblBacteria" id="CAF31038">
    <property type="protein sequence ID" value="CAF31038"/>
    <property type="gene ID" value="MMP1482"/>
</dbReference>
<dbReference type="GeneID" id="10983057"/>
<dbReference type="KEGG" id="mmp:MMP1482"/>
<dbReference type="PATRIC" id="fig|267377.15.peg.1518"/>
<dbReference type="eggNOG" id="arCOG04384">
    <property type="taxonomic scope" value="Archaea"/>
</dbReference>
<dbReference type="HOGENOM" id="CLU_136197_2_0_2"/>
<dbReference type="UniPathway" id="UPA00148"/>
<dbReference type="Proteomes" id="UP000000590">
    <property type="component" value="Chromosome"/>
</dbReference>
<dbReference type="GO" id="GO:0005886">
    <property type="term" value="C:plasma membrane"/>
    <property type="evidence" value="ECO:0007669"/>
    <property type="project" value="UniProtKB-SubCell"/>
</dbReference>
<dbReference type="GO" id="GO:0015087">
    <property type="term" value="F:cobalt ion transmembrane transporter activity"/>
    <property type="evidence" value="ECO:0007669"/>
    <property type="project" value="UniProtKB-UniRule"/>
</dbReference>
<dbReference type="GO" id="GO:0009236">
    <property type="term" value="P:cobalamin biosynthetic process"/>
    <property type="evidence" value="ECO:0007669"/>
    <property type="project" value="UniProtKB-UniRule"/>
</dbReference>
<dbReference type="HAMAP" id="MF_00330">
    <property type="entry name" value="CbiN"/>
    <property type="match status" value="1"/>
</dbReference>
<dbReference type="InterPro" id="IPR003705">
    <property type="entry name" value="CbiN"/>
</dbReference>
<dbReference type="NCBIfam" id="TIGR01165">
    <property type="entry name" value="cbiN"/>
    <property type="match status" value="1"/>
</dbReference>
<dbReference type="NCBIfam" id="NF002780">
    <property type="entry name" value="PRK02898.1"/>
    <property type="match status" value="1"/>
</dbReference>
<dbReference type="PANTHER" id="PTHR38662">
    <property type="entry name" value="COBALT TRANSPORT PROTEIN CBIN"/>
    <property type="match status" value="1"/>
</dbReference>
<dbReference type="PANTHER" id="PTHR38662:SF1">
    <property type="entry name" value="COBALT TRANSPORT PROTEIN CBIN"/>
    <property type="match status" value="1"/>
</dbReference>
<dbReference type="Pfam" id="PF02553">
    <property type="entry name" value="CbiN"/>
    <property type="match status" value="1"/>
</dbReference>
<reference key="1">
    <citation type="journal article" date="2004" name="J. Bacteriol.">
        <title>Complete genome sequence of the genetically tractable hydrogenotrophic methanogen Methanococcus maripaludis.</title>
        <authorList>
            <person name="Hendrickson E.L."/>
            <person name="Kaul R."/>
            <person name="Zhou Y."/>
            <person name="Bovee D."/>
            <person name="Chapman P."/>
            <person name="Chung J."/>
            <person name="Conway de Macario E."/>
            <person name="Dodsworth J.A."/>
            <person name="Gillett W."/>
            <person name="Graham D.E."/>
            <person name="Hackett M."/>
            <person name="Haydock A.K."/>
            <person name="Kang A."/>
            <person name="Land M.L."/>
            <person name="Levy R."/>
            <person name="Lie T.J."/>
            <person name="Major T.A."/>
            <person name="Moore B.C."/>
            <person name="Porat I."/>
            <person name="Palmeiri A."/>
            <person name="Rouse G."/>
            <person name="Saenphimmachak C."/>
            <person name="Soell D."/>
            <person name="Van Dien S."/>
            <person name="Wang T."/>
            <person name="Whitman W.B."/>
            <person name="Xia Q."/>
            <person name="Zhang Y."/>
            <person name="Larimer F.W."/>
            <person name="Olson M.V."/>
            <person name="Leigh J.A."/>
        </authorList>
    </citation>
    <scope>NUCLEOTIDE SEQUENCE [LARGE SCALE GENOMIC DNA]</scope>
    <source>
        <strain>DSM 14266 / JCM 13030 / NBRC 101832 / S2 / LL</strain>
    </source>
</reference>
<gene>
    <name evidence="1" type="primary">cbiN</name>
    <name type="ordered locus">MMP1482</name>
</gene>
<proteinExistence type="inferred from homology"/>
<comment type="function">
    <text evidence="1">Part of the energy-coupling factor (ECF) transporter complex CbiMNOQ involved in cobalt import.</text>
</comment>
<comment type="pathway">
    <text evidence="1">Cofactor biosynthesis; adenosylcobalamin biosynthesis.</text>
</comment>
<comment type="subunit">
    <text evidence="1">Forms an energy-coupling factor (ECF) transporter complex composed of an ATP-binding protein (A component, CbiO), a transmembrane protein (T component, CbiQ) and 2 possible substrate-capture proteins (S components, CbiM and CbiN) of unknown stoichimetry.</text>
</comment>
<comment type="subcellular location">
    <subcellularLocation>
        <location evidence="1">Cell membrane</location>
        <topology evidence="1">Multi-pass membrane protein</topology>
    </subcellularLocation>
</comment>
<comment type="similarity">
    <text evidence="1">Belongs to the CbiN family.</text>
</comment>